<protein>
    <recommendedName>
        <fullName evidence="1">Signal recognition particle receptor FtsY</fullName>
        <shortName evidence="1">SRP receptor</shortName>
        <ecNumber evidence="1 3">3.6.5.4</ecNumber>
    </recommendedName>
</protein>
<dbReference type="EC" id="3.6.5.4" evidence="1 3"/>
<dbReference type="EMBL" id="X13965">
    <property type="protein sequence ID" value="CAA32144.1"/>
    <property type="status" value="ALT_FRAME"/>
    <property type="molecule type" value="Genomic_DNA"/>
</dbReference>
<dbReference type="PIR" id="S02017">
    <property type="entry name" value="S02017"/>
</dbReference>
<dbReference type="SMR" id="P14929"/>
<dbReference type="GO" id="GO:0005737">
    <property type="term" value="C:cytoplasm"/>
    <property type="evidence" value="ECO:0007669"/>
    <property type="project" value="UniProtKB-SubCell"/>
</dbReference>
<dbReference type="GO" id="GO:0005886">
    <property type="term" value="C:plasma membrane"/>
    <property type="evidence" value="ECO:0007669"/>
    <property type="project" value="UniProtKB-SubCell"/>
</dbReference>
<dbReference type="GO" id="GO:0016887">
    <property type="term" value="F:ATP hydrolysis activity"/>
    <property type="evidence" value="ECO:0007669"/>
    <property type="project" value="InterPro"/>
</dbReference>
<dbReference type="GO" id="GO:0005525">
    <property type="term" value="F:GTP binding"/>
    <property type="evidence" value="ECO:0007669"/>
    <property type="project" value="UniProtKB-UniRule"/>
</dbReference>
<dbReference type="GO" id="GO:0003924">
    <property type="term" value="F:GTPase activity"/>
    <property type="evidence" value="ECO:0007669"/>
    <property type="project" value="UniProtKB-UniRule"/>
</dbReference>
<dbReference type="GO" id="GO:0005047">
    <property type="term" value="F:signal recognition particle binding"/>
    <property type="evidence" value="ECO:0007669"/>
    <property type="project" value="TreeGrafter"/>
</dbReference>
<dbReference type="GO" id="GO:0006614">
    <property type="term" value="P:SRP-dependent cotranslational protein targeting to membrane"/>
    <property type="evidence" value="ECO:0007669"/>
    <property type="project" value="InterPro"/>
</dbReference>
<dbReference type="CDD" id="cd17874">
    <property type="entry name" value="FtsY"/>
    <property type="match status" value="1"/>
</dbReference>
<dbReference type="FunFam" id="1.20.120.140:FF:000002">
    <property type="entry name" value="Signal recognition particle receptor FtsY"/>
    <property type="match status" value="1"/>
</dbReference>
<dbReference type="FunFam" id="3.40.50.300:FF:000053">
    <property type="entry name" value="Signal recognition particle receptor FtsY"/>
    <property type="match status" value="1"/>
</dbReference>
<dbReference type="Gene3D" id="3.40.50.300">
    <property type="entry name" value="P-loop containing nucleotide triphosphate hydrolases"/>
    <property type="match status" value="1"/>
</dbReference>
<dbReference type="Gene3D" id="1.20.120.140">
    <property type="entry name" value="Signal recognition particle SRP54, nucleotide-binding domain"/>
    <property type="match status" value="1"/>
</dbReference>
<dbReference type="HAMAP" id="MF_00920">
    <property type="entry name" value="FtsY"/>
    <property type="match status" value="1"/>
</dbReference>
<dbReference type="InterPro" id="IPR003593">
    <property type="entry name" value="AAA+_ATPase"/>
</dbReference>
<dbReference type="InterPro" id="IPR027417">
    <property type="entry name" value="P-loop_NTPase"/>
</dbReference>
<dbReference type="InterPro" id="IPR013822">
    <property type="entry name" value="Signal_recog_particl_SRP54_hlx"/>
</dbReference>
<dbReference type="InterPro" id="IPR004390">
    <property type="entry name" value="SR_rcpt_FtsY"/>
</dbReference>
<dbReference type="InterPro" id="IPR036225">
    <property type="entry name" value="SRP/SRP_N"/>
</dbReference>
<dbReference type="InterPro" id="IPR000897">
    <property type="entry name" value="SRP54_GTPase_dom"/>
</dbReference>
<dbReference type="InterPro" id="IPR042101">
    <property type="entry name" value="SRP54_N_sf"/>
</dbReference>
<dbReference type="NCBIfam" id="TIGR00064">
    <property type="entry name" value="ftsY"/>
    <property type="match status" value="1"/>
</dbReference>
<dbReference type="PANTHER" id="PTHR43134">
    <property type="entry name" value="SIGNAL RECOGNITION PARTICLE RECEPTOR SUBUNIT ALPHA"/>
    <property type="match status" value="1"/>
</dbReference>
<dbReference type="PANTHER" id="PTHR43134:SF1">
    <property type="entry name" value="SIGNAL RECOGNITION PARTICLE RECEPTOR SUBUNIT ALPHA"/>
    <property type="match status" value="1"/>
</dbReference>
<dbReference type="Pfam" id="PF00448">
    <property type="entry name" value="SRP54"/>
    <property type="match status" value="1"/>
</dbReference>
<dbReference type="Pfam" id="PF02881">
    <property type="entry name" value="SRP54_N"/>
    <property type="match status" value="1"/>
</dbReference>
<dbReference type="SMART" id="SM00382">
    <property type="entry name" value="AAA"/>
    <property type="match status" value="1"/>
</dbReference>
<dbReference type="SMART" id="SM00962">
    <property type="entry name" value="SRP54"/>
    <property type="match status" value="1"/>
</dbReference>
<dbReference type="SMART" id="SM00963">
    <property type="entry name" value="SRP54_N"/>
    <property type="match status" value="1"/>
</dbReference>
<dbReference type="SUPFAM" id="SSF58113">
    <property type="entry name" value="Apolipoprotein A-I"/>
    <property type="match status" value="1"/>
</dbReference>
<dbReference type="SUPFAM" id="SSF47364">
    <property type="entry name" value="Domain of the SRP/SRP receptor G-proteins"/>
    <property type="match status" value="1"/>
</dbReference>
<dbReference type="SUPFAM" id="SSF52540">
    <property type="entry name" value="P-loop containing nucleoside triphosphate hydrolases"/>
    <property type="match status" value="1"/>
</dbReference>
<dbReference type="PROSITE" id="PS00300">
    <property type="entry name" value="SRP54"/>
    <property type="match status" value="1"/>
</dbReference>
<reference key="1">
    <citation type="journal article" date="1988" name="EMBO J.">
        <title>Pilin expression in Neisseria gonorrhoeae is under both positive and negative transcriptional control.</title>
        <authorList>
            <person name="Taha M.K."/>
            <person name="So M."/>
            <person name="Seifert H.S."/>
            <person name="Billyard E."/>
            <person name="Marchal C."/>
        </authorList>
    </citation>
    <scope>NUCLEOTIDE SEQUENCE [GENOMIC DNA]</scope>
    <source>
        <strain>MS11A</strain>
    </source>
</reference>
<reference key="2">
    <citation type="journal article" date="1995" name="J. Biol. Chem.">
        <title>The Neisseria transcriptional regulator PilA has a GTPase activity.</title>
        <authorList>
            <person name="Arvidson C.G."/>
            <person name="So M."/>
        </authorList>
    </citation>
    <scope>CATALYTIC ACTIVITY</scope>
</reference>
<reference key="3">
    <citation type="journal article" date="1999" name="J. Bacteriol.">
        <title>Neisseria gonorrhoeae PilA is an FtsY homolog.</title>
        <authorList>
            <person name="Arvidson C.G."/>
            <person name="Powers T."/>
            <person name="Walter P."/>
            <person name="So M."/>
        </authorList>
    </citation>
    <scope>FUNCTION</scope>
    <scope>MUTAGENESIS OF GLY-307</scope>
</reference>
<gene>
    <name evidence="1" type="primary">ftsY</name>
    <name evidence="5" type="synonym">pilA</name>
</gene>
<organism>
    <name type="scientific">Neisseria gonorrhoeae</name>
    <dbReference type="NCBI Taxonomy" id="485"/>
    <lineage>
        <taxon>Bacteria</taxon>
        <taxon>Pseudomonadati</taxon>
        <taxon>Pseudomonadota</taxon>
        <taxon>Betaproteobacteria</taxon>
        <taxon>Neisseriales</taxon>
        <taxon>Neisseriaceae</taxon>
        <taxon>Neisseria</taxon>
    </lineage>
</organism>
<comment type="function">
    <text evidence="1 4">Involved in targeting and insertion of nascent membrane proteins into the cytoplasmic membrane. Acts as a receptor for the complex formed by the signal recognition particle (SRP) and the ribosome-nascent chain (RNC). Interaction with SRP-RNC leads to the transfer of the RNC complex to the Sec translocase for insertion into the membrane, the hydrolysis of GTP by both Ffh and FtsY, and the dissociation of the SRP-FtsY complex into the individual components.</text>
</comment>
<comment type="catalytic activity">
    <reaction evidence="1 3">
        <text>GTP + H2O = GDP + phosphate + H(+)</text>
        <dbReference type="Rhea" id="RHEA:19669"/>
        <dbReference type="ChEBI" id="CHEBI:15377"/>
        <dbReference type="ChEBI" id="CHEBI:15378"/>
        <dbReference type="ChEBI" id="CHEBI:37565"/>
        <dbReference type="ChEBI" id="CHEBI:43474"/>
        <dbReference type="ChEBI" id="CHEBI:58189"/>
        <dbReference type="EC" id="3.6.5.4"/>
    </reaction>
</comment>
<comment type="cofactor">
    <cofactor>
        <name>Mg(2+)</name>
        <dbReference type="ChEBI" id="CHEBI:18420"/>
    </cofactor>
</comment>
<comment type="subunit">
    <text evidence="1">Part of the signal recognition particle protein translocation system, which is composed of SRP and FtsY. SRP is a ribonucleoprotein composed of Ffh and a 4.5S RNA molecule.</text>
</comment>
<comment type="subcellular location">
    <subcellularLocation>
        <location>Cell membrane</location>
        <topology>Peripheral membrane protein</topology>
        <orientation>Cytoplasmic side</orientation>
    </subcellularLocation>
    <subcellularLocation>
        <location evidence="1">Cytoplasm</location>
    </subcellularLocation>
</comment>
<comment type="miscellaneous">
    <text>In vitro purified FtsY has been shown to bind to pilE promoter DNA in a sequence-specific manner using gel retardation assay but it cannot be explained.</text>
</comment>
<comment type="similarity">
    <text evidence="1">Belongs to the GTP-binding SRP family. FtsY subfamily.</text>
</comment>
<comment type="caution">
    <text evidence="7">Was originally thought to activate the pilin promoter.</text>
</comment>
<comment type="sequence caution" evidence="6">
    <conflict type="frameshift">
        <sequence resource="EMBL-CDS" id="CAA32144"/>
    </conflict>
</comment>
<keyword id="KW-1003">Cell membrane</keyword>
<keyword id="KW-0963">Cytoplasm</keyword>
<keyword id="KW-0342">GTP-binding</keyword>
<keyword id="KW-0378">Hydrolase</keyword>
<keyword id="KW-0472">Membrane</keyword>
<keyword id="KW-0547">Nucleotide-binding</keyword>
<keyword id="KW-0675">Receptor</keyword>
<accession>P14929</accession>
<evidence type="ECO:0000255" key="1">
    <source>
        <dbReference type="HAMAP-Rule" id="MF_00920"/>
    </source>
</evidence>
<evidence type="ECO:0000256" key="2">
    <source>
        <dbReference type="SAM" id="MobiDB-lite"/>
    </source>
</evidence>
<evidence type="ECO:0000269" key="3">
    <source>
    </source>
</evidence>
<evidence type="ECO:0000269" key="4">
    <source>
    </source>
</evidence>
<evidence type="ECO:0000303" key="5">
    <source>
    </source>
</evidence>
<evidence type="ECO:0000305" key="6"/>
<evidence type="ECO:0000305" key="7">
    <source>
    </source>
</evidence>
<feature type="chain" id="PRO_0000101141" description="Signal recognition particle receptor FtsY">
    <location>
        <begin position="1"/>
        <end position="416"/>
    </location>
</feature>
<feature type="region of interest" description="Disordered" evidence="2">
    <location>
        <begin position="1"/>
        <end position="24"/>
    </location>
</feature>
<feature type="compositionally biased region" description="Basic residues" evidence="2">
    <location>
        <begin position="1"/>
        <end position="10"/>
    </location>
</feature>
<feature type="binding site" evidence="1">
    <location>
        <begin position="224"/>
        <end position="231"/>
    </location>
    <ligand>
        <name>GTP</name>
        <dbReference type="ChEBI" id="CHEBI:37565"/>
    </ligand>
</feature>
<feature type="binding site" evidence="1">
    <location>
        <begin position="304"/>
        <end position="308"/>
    </location>
    <ligand>
        <name>GTP</name>
        <dbReference type="ChEBI" id="CHEBI:37565"/>
    </ligand>
</feature>
<feature type="binding site" evidence="1">
    <location>
        <begin position="368"/>
        <end position="371"/>
    </location>
    <ligand>
        <name>GTP</name>
        <dbReference type="ChEBI" id="CHEBI:37565"/>
    </ligand>
</feature>
<feature type="mutagenesis site" description="Decrease in GTPase activity; unable to complement the lack of FtsY in E.coli; no translocation activity." evidence="4">
    <original>G</original>
    <variation>A</variation>
    <location>
        <position position="307"/>
    </location>
</feature>
<name>FTSY_NEIGO</name>
<proteinExistence type="evidence at protein level"/>
<sequence>MFSFFRRKKKQETPALEEAQVQETAAKVESEVAQIVGNIKEDVESLAESVKGRAESAVETVSGAVEQVKETVAEMPSEAGEAAERVESAKEAVAETVGEAVGQVQEAVATTEEHKLGWAARLKQGLAKSRDKMAKSLAGVFGGGQIGEDLYEELETVLITGDMGMEATEYLMKDVRGRVSLKGLKDGNELRGALKEALYDLIKPLEKPLVLPETKEPFVIMLAGINGAGKTTSIGKLAKYFQAQGKSVLLAAGDTFRAAAREQLQAWGGRNNVTVISQTTGDSAAVCFDAVQAAKARIDIVLADTAGRLPTQLHLMEEIKKVKRVLQKAIPGAPHEIIVVLDANIGQNAVNQVKAFDDALGLTGLIVTKLDGTAKGGILAALASDRPVPVRYIGVGEGIDDLRPFDARAFVDRLLD</sequence>